<keyword id="KW-0150">Chloroplast</keyword>
<keyword id="KW-0934">Plastid</keyword>
<keyword id="KW-0687">Ribonucleoprotein</keyword>
<keyword id="KW-0689">Ribosomal protein</keyword>
<keyword id="KW-0694">RNA-binding</keyword>
<keyword id="KW-0699">rRNA-binding</keyword>
<feature type="chain" id="PRO_0000354563" description="Large ribosomal subunit protein uL22c">
    <location>
        <begin position="1"/>
        <end position="141"/>
    </location>
</feature>
<comment type="function">
    <text evidence="1">This protein binds specifically to 23S rRNA.</text>
</comment>
<comment type="function">
    <text evidence="1">The globular domain of the protein is located near the polypeptide exit tunnel on the outside of the subunit, while an extended beta-hairpin is found that lines the wall of the exit tunnel in the center of the 70S ribosome.</text>
</comment>
<comment type="subunit">
    <text evidence="1">Part of the 50S ribosomal subunit.</text>
</comment>
<comment type="subcellular location">
    <subcellularLocation>
        <location>Plastid</location>
        <location>Chloroplast</location>
    </subcellularLocation>
</comment>
<comment type="similarity">
    <text evidence="2">Belongs to the universal ribosomal protein uL22 family.</text>
</comment>
<gene>
    <name type="primary">rpl22</name>
</gene>
<geneLocation type="chloroplast"/>
<protein>
    <recommendedName>
        <fullName evidence="2">Large ribosomal subunit protein uL22c</fullName>
    </recommendedName>
    <alternativeName>
        <fullName>50S ribosomal protein L22, chloroplastic</fullName>
    </alternativeName>
</protein>
<evidence type="ECO:0000250" key="1"/>
<evidence type="ECO:0000305" key="2"/>
<organism>
    <name type="scientific">Chloranthus spicatus</name>
    <name type="common">Chulantree</name>
    <name type="synonym">Nigrina spicata</name>
    <dbReference type="NCBI Taxonomy" id="13006"/>
    <lineage>
        <taxon>Eukaryota</taxon>
        <taxon>Viridiplantae</taxon>
        <taxon>Streptophyta</taxon>
        <taxon>Embryophyta</taxon>
        <taxon>Tracheophyta</taxon>
        <taxon>Spermatophyta</taxon>
        <taxon>Magnoliopsida</taxon>
        <taxon>Chloranthales</taxon>
        <taxon>Chloranthaceae</taxon>
        <taxon>Chloranthus</taxon>
    </lineage>
</organism>
<proteinExistence type="inferred from homology"/>
<reference key="1">
    <citation type="journal article" date="2007" name="Mol. Phylogenet. Evol.">
        <title>Phylogenetic and evolutionary implications of complete chloroplast genome sequences of four early-diverging angiosperms: Buxus (Buxaceae), Chloranthus (Chloranthaceae), Dioscorea (Dioscoreaceae), and Illicium (Schisandraceae).</title>
        <authorList>
            <person name="Hansen D.R."/>
            <person name="Dastidar S.G."/>
            <person name="Cai Z."/>
            <person name="Penaflor C."/>
            <person name="Kuehl J.V."/>
            <person name="Boore J.L."/>
            <person name="Jansen R.K."/>
        </authorList>
    </citation>
    <scope>NUCLEOTIDE SEQUENCE [LARGE SCALE GENOMIC DNA]</scope>
</reference>
<dbReference type="EMBL" id="EF380352">
    <property type="protein sequence ID" value="ABQ43299.1"/>
    <property type="molecule type" value="Genomic_DNA"/>
</dbReference>
<dbReference type="RefSeq" id="YP_001294138.1">
    <property type="nucleotide sequence ID" value="NC_009598.1"/>
</dbReference>
<dbReference type="SMR" id="A6MMG2"/>
<dbReference type="GeneID" id="5236432"/>
<dbReference type="GO" id="GO:0009507">
    <property type="term" value="C:chloroplast"/>
    <property type="evidence" value="ECO:0007669"/>
    <property type="project" value="UniProtKB-SubCell"/>
</dbReference>
<dbReference type="GO" id="GO:0015934">
    <property type="term" value="C:large ribosomal subunit"/>
    <property type="evidence" value="ECO:0007669"/>
    <property type="project" value="InterPro"/>
</dbReference>
<dbReference type="GO" id="GO:0019843">
    <property type="term" value="F:rRNA binding"/>
    <property type="evidence" value="ECO:0007669"/>
    <property type="project" value="UniProtKB-UniRule"/>
</dbReference>
<dbReference type="GO" id="GO:0003735">
    <property type="term" value="F:structural constituent of ribosome"/>
    <property type="evidence" value="ECO:0007669"/>
    <property type="project" value="InterPro"/>
</dbReference>
<dbReference type="GO" id="GO:0006412">
    <property type="term" value="P:translation"/>
    <property type="evidence" value="ECO:0007669"/>
    <property type="project" value="UniProtKB-UniRule"/>
</dbReference>
<dbReference type="CDD" id="cd00336">
    <property type="entry name" value="Ribosomal_L22"/>
    <property type="match status" value="1"/>
</dbReference>
<dbReference type="Gene3D" id="3.90.470.10">
    <property type="entry name" value="Ribosomal protein L22/L17"/>
    <property type="match status" value="1"/>
</dbReference>
<dbReference type="HAMAP" id="MF_01331_B">
    <property type="entry name" value="Ribosomal_uL22_B"/>
    <property type="match status" value="1"/>
</dbReference>
<dbReference type="InterPro" id="IPR001063">
    <property type="entry name" value="Ribosomal_uL22"/>
</dbReference>
<dbReference type="InterPro" id="IPR005727">
    <property type="entry name" value="Ribosomal_uL22_bac/chlpt-type"/>
</dbReference>
<dbReference type="InterPro" id="IPR047867">
    <property type="entry name" value="Ribosomal_uL22_bac/org-type"/>
</dbReference>
<dbReference type="InterPro" id="IPR018260">
    <property type="entry name" value="Ribosomal_uL22_CS"/>
</dbReference>
<dbReference type="InterPro" id="IPR036394">
    <property type="entry name" value="Ribosomal_uL22_sf"/>
</dbReference>
<dbReference type="NCBIfam" id="TIGR01044">
    <property type="entry name" value="rplV_bact"/>
    <property type="match status" value="1"/>
</dbReference>
<dbReference type="PANTHER" id="PTHR13501">
    <property type="entry name" value="CHLOROPLAST 50S RIBOSOMAL PROTEIN L22-RELATED"/>
    <property type="match status" value="1"/>
</dbReference>
<dbReference type="PANTHER" id="PTHR13501:SF10">
    <property type="entry name" value="LARGE RIBOSOMAL SUBUNIT PROTEIN UL22M"/>
    <property type="match status" value="1"/>
</dbReference>
<dbReference type="Pfam" id="PF00237">
    <property type="entry name" value="Ribosomal_L22"/>
    <property type="match status" value="1"/>
</dbReference>
<dbReference type="SUPFAM" id="SSF54843">
    <property type="entry name" value="Ribosomal protein L22"/>
    <property type="match status" value="1"/>
</dbReference>
<dbReference type="PROSITE" id="PS00464">
    <property type="entry name" value="RIBOSOMAL_L22"/>
    <property type="match status" value="1"/>
</dbReference>
<name>RK22_CHLSC</name>
<accession>A6MMG2</accession>
<sequence length="141" mass="16364">MKKKRFNSDIEVQAFARHICMSAHKMRRVIDQIRGRSYEQTLMILELMPYRASYPIFRLIYSAAANASKTMGSKEADSLISKAEVNEGTFIKKLKPRARGRSYPIKKPTCHIIIVLKDKSKKPKSFLERKYGFVDKYMIGK</sequence>